<keyword id="KW-0687">Ribonucleoprotein</keyword>
<keyword id="KW-0689">Ribosomal protein</keyword>
<keyword id="KW-0694">RNA-binding</keyword>
<keyword id="KW-0699">rRNA-binding</keyword>
<organism>
    <name type="scientific">Clostridium beijerinckii (strain ATCC 51743 / NCIMB 8052)</name>
    <name type="common">Clostridium acetobutylicum</name>
    <dbReference type="NCBI Taxonomy" id="290402"/>
    <lineage>
        <taxon>Bacteria</taxon>
        <taxon>Bacillati</taxon>
        <taxon>Bacillota</taxon>
        <taxon>Clostridia</taxon>
        <taxon>Eubacteriales</taxon>
        <taxon>Clostridiaceae</taxon>
        <taxon>Clostridium</taxon>
    </lineage>
</organism>
<dbReference type="EMBL" id="CP000721">
    <property type="protein sequence ID" value="ABR32350.1"/>
    <property type="molecule type" value="Genomic_DNA"/>
</dbReference>
<dbReference type="RefSeq" id="WP_011967517.1">
    <property type="nucleotide sequence ID" value="NC_009617.1"/>
</dbReference>
<dbReference type="SMR" id="A6LPS0"/>
<dbReference type="GeneID" id="66343050"/>
<dbReference type="KEGG" id="cbe:Cbei_0160"/>
<dbReference type="eggNOG" id="COG0186">
    <property type="taxonomic scope" value="Bacteria"/>
</dbReference>
<dbReference type="HOGENOM" id="CLU_073626_1_0_9"/>
<dbReference type="Proteomes" id="UP000000565">
    <property type="component" value="Chromosome"/>
</dbReference>
<dbReference type="GO" id="GO:0022627">
    <property type="term" value="C:cytosolic small ribosomal subunit"/>
    <property type="evidence" value="ECO:0007669"/>
    <property type="project" value="TreeGrafter"/>
</dbReference>
<dbReference type="GO" id="GO:0019843">
    <property type="term" value="F:rRNA binding"/>
    <property type="evidence" value="ECO:0007669"/>
    <property type="project" value="UniProtKB-UniRule"/>
</dbReference>
<dbReference type="GO" id="GO:0003735">
    <property type="term" value="F:structural constituent of ribosome"/>
    <property type="evidence" value="ECO:0007669"/>
    <property type="project" value="InterPro"/>
</dbReference>
<dbReference type="GO" id="GO:0006412">
    <property type="term" value="P:translation"/>
    <property type="evidence" value="ECO:0007669"/>
    <property type="project" value="UniProtKB-UniRule"/>
</dbReference>
<dbReference type="CDD" id="cd00364">
    <property type="entry name" value="Ribosomal_uS17"/>
    <property type="match status" value="1"/>
</dbReference>
<dbReference type="FunFam" id="2.40.50.140:FF:000123">
    <property type="entry name" value="30S ribosomal protein S17"/>
    <property type="match status" value="1"/>
</dbReference>
<dbReference type="Gene3D" id="2.40.50.140">
    <property type="entry name" value="Nucleic acid-binding proteins"/>
    <property type="match status" value="1"/>
</dbReference>
<dbReference type="HAMAP" id="MF_01345_B">
    <property type="entry name" value="Ribosomal_uS17_B"/>
    <property type="match status" value="1"/>
</dbReference>
<dbReference type="InterPro" id="IPR012340">
    <property type="entry name" value="NA-bd_OB-fold"/>
</dbReference>
<dbReference type="InterPro" id="IPR000266">
    <property type="entry name" value="Ribosomal_uS17"/>
</dbReference>
<dbReference type="InterPro" id="IPR019984">
    <property type="entry name" value="Ribosomal_uS17_bact/chlr"/>
</dbReference>
<dbReference type="NCBIfam" id="NF004123">
    <property type="entry name" value="PRK05610.1"/>
    <property type="match status" value="1"/>
</dbReference>
<dbReference type="NCBIfam" id="TIGR03635">
    <property type="entry name" value="uS17_bact"/>
    <property type="match status" value="1"/>
</dbReference>
<dbReference type="PANTHER" id="PTHR10744">
    <property type="entry name" value="40S RIBOSOMAL PROTEIN S11 FAMILY MEMBER"/>
    <property type="match status" value="1"/>
</dbReference>
<dbReference type="PANTHER" id="PTHR10744:SF1">
    <property type="entry name" value="SMALL RIBOSOMAL SUBUNIT PROTEIN US17M"/>
    <property type="match status" value="1"/>
</dbReference>
<dbReference type="Pfam" id="PF00366">
    <property type="entry name" value="Ribosomal_S17"/>
    <property type="match status" value="1"/>
</dbReference>
<dbReference type="PRINTS" id="PR00973">
    <property type="entry name" value="RIBOSOMALS17"/>
</dbReference>
<dbReference type="SUPFAM" id="SSF50249">
    <property type="entry name" value="Nucleic acid-binding proteins"/>
    <property type="match status" value="1"/>
</dbReference>
<protein>
    <recommendedName>
        <fullName evidence="1">Small ribosomal subunit protein uS17</fullName>
    </recommendedName>
    <alternativeName>
        <fullName evidence="2">30S ribosomal protein S17</fullName>
    </alternativeName>
</protein>
<name>RS17_CLOB8</name>
<comment type="function">
    <text evidence="1">One of the primary rRNA binding proteins, it binds specifically to the 5'-end of 16S ribosomal RNA.</text>
</comment>
<comment type="subunit">
    <text evidence="1">Part of the 30S ribosomal subunit.</text>
</comment>
<comment type="similarity">
    <text evidence="1">Belongs to the universal ribosomal protein uS17 family.</text>
</comment>
<reference key="1">
    <citation type="submission" date="2007-06" db="EMBL/GenBank/DDBJ databases">
        <title>Complete sequence of Clostridium beijerinckii NCIMB 8052.</title>
        <authorList>
            <consortium name="US DOE Joint Genome Institute"/>
            <person name="Copeland A."/>
            <person name="Lucas S."/>
            <person name="Lapidus A."/>
            <person name="Barry K."/>
            <person name="Detter J.C."/>
            <person name="Glavina del Rio T."/>
            <person name="Hammon N."/>
            <person name="Israni S."/>
            <person name="Dalin E."/>
            <person name="Tice H."/>
            <person name="Pitluck S."/>
            <person name="Sims D."/>
            <person name="Brettin T."/>
            <person name="Bruce D."/>
            <person name="Tapia R."/>
            <person name="Brainard J."/>
            <person name="Schmutz J."/>
            <person name="Larimer F."/>
            <person name="Land M."/>
            <person name="Hauser L."/>
            <person name="Kyrpides N."/>
            <person name="Mikhailova N."/>
            <person name="Bennet G."/>
            <person name="Cann I."/>
            <person name="Chen J.-S."/>
            <person name="Contreras A.L."/>
            <person name="Jones D."/>
            <person name="Kashket E."/>
            <person name="Mitchell W."/>
            <person name="Stoddard S."/>
            <person name="Schwarz W."/>
            <person name="Qureshi N."/>
            <person name="Young M."/>
            <person name="Shi Z."/>
            <person name="Ezeji T."/>
            <person name="White B."/>
            <person name="Blaschek H."/>
            <person name="Richardson P."/>
        </authorList>
    </citation>
    <scope>NUCLEOTIDE SEQUENCE [LARGE SCALE GENOMIC DNA]</scope>
    <source>
        <strain>ATCC 51743 / NCIMB 8052</strain>
    </source>
</reference>
<evidence type="ECO:0000255" key="1">
    <source>
        <dbReference type="HAMAP-Rule" id="MF_01345"/>
    </source>
</evidence>
<evidence type="ECO:0000305" key="2"/>
<accession>A6LPS0</accession>
<proteinExistence type="inferred from homology"/>
<gene>
    <name evidence="1" type="primary">rpsQ</name>
    <name type="ordered locus">Cbei_0160</name>
</gene>
<feature type="chain" id="PRO_1000086834" description="Small ribosomal subunit protein uS17">
    <location>
        <begin position="1"/>
        <end position="84"/>
    </location>
</feature>
<sequence length="84" mass="9946">MERSLRKKRIGRVVSDKMEKTIVVAVETKVRHPLYGKTVNRTTKFKVHDENNEAKINDRVSIMETRPLSKDKRWRLVEIVEKAK</sequence>